<dbReference type="EC" id="2.5.1.141" evidence="1"/>
<dbReference type="EMBL" id="CP001349">
    <property type="protein sequence ID" value="ACL55306.1"/>
    <property type="molecule type" value="Genomic_DNA"/>
</dbReference>
<dbReference type="RefSeq" id="WP_015927019.1">
    <property type="nucleotide sequence ID" value="NC_011894.1"/>
</dbReference>
<dbReference type="SMR" id="B8I9Q3"/>
<dbReference type="STRING" id="460265.Mnod_0262"/>
<dbReference type="KEGG" id="mno:Mnod_0262"/>
<dbReference type="eggNOG" id="COG0109">
    <property type="taxonomic scope" value="Bacteria"/>
</dbReference>
<dbReference type="HOGENOM" id="CLU_029631_0_2_5"/>
<dbReference type="OrthoDB" id="9814417at2"/>
<dbReference type="UniPathway" id="UPA00834">
    <property type="reaction ID" value="UER00712"/>
</dbReference>
<dbReference type="Proteomes" id="UP000008207">
    <property type="component" value="Chromosome"/>
</dbReference>
<dbReference type="GO" id="GO:0005886">
    <property type="term" value="C:plasma membrane"/>
    <property type="evidence" value="ECO:0007669"/>
    <property type="project" value="UniProtKB-SubCell"/>
</dbReference>
<dbReference type="GO" id="GO:0008495">
    <property type="term" value="F:protoheme IX farnesyltransferase activity"/>
    <property type="evidence" value="ECO:0007669"/>
    <property type="project" value="UniProtKB-UniRule"/>
</dbReference>
<dbReference type="GO" id="GO:0048034">
    <property type="term" value="P:heme O biosynthetic process"/>
    <property type="evidence" value="ECO:0007669"/>
    <property type="project" value="UniProtKB-UniRule"/>
</dbReference>
<dbReference type="CDD" id="cd13957">
    <property type="entry name" value="PT_UbiA_Cox10"/>
    <property type="match status" value="1"/>
</dbReference>
<dbReference type="Gene3D" id="1.10.357.140">
    <property type="entry name" value="UbiA prenyltransferase"/>
    <property type="match status" value="1"/>
</dbReference>
<dbReference type="HAMAP" id="MF_00154">
    <property type="entry name" value="CyoE_CtaB"/>
    <property type="match status" value="1"/>
</dbReference>
<dbReference type="InterPro" id="IPR006369">
    <property type="entry name" value="Protohaem_IX_farnesylTrfase"/>
</dbReference>
<dbReference type="InterPro" id="IPR000537">
    <property type="entry name" value="UbiA_prenyltransferase"/>
</dbReference>
<dbReference type="InterPro" id="IPR030470">
    <property type="entry name" value="UbiA_prenylTrfase_CS"/>
</dbReference>
<dbReference type="InterPro" id="IPR044878">
    <property type="entry name" value="UbiA_sf"/>
</dbReference>
<dbReference type="NCBIfam" id="TIGR01473">
    <property type="entry name" value="cyoE_ctaB"/>
    <property type="match status" value="1"/>
</dbReference>
<dbReference type="NCBIfam" id="NF003349">
    <property type="entry name" value="PRK04375.1-2"/>
    <property type="match status" value="1"/>
</dbReference>
<dbReference type="PANTHER" id="PTHR43448:SF7">
    <property type="entry name" value="4-HYDROXYBENZOATE SOLANESYLTRANSFERASE"/>
    <property type="match status" value="1"/>
</dbReference>
<dbReference type="PANTHER" id="PTHR43448">
    <property type="entry name" value="PROTOHEME IX FARNESYLTRANSFERASE, MITOCHONDRIAL"/>
    <property type="match status" value="1"/>
</dbReference>
<dbReference type="Pfam" id="PF01040">
    <property type="entry name" value="UbiA"/>
    <property type="match status" value="1"/>
</dbReference>
<dbReference type="PROSITE" id="PS00943">
    <property type="entry name" value="UBIA"/>
    <property type="match status" value="1"/>
</dbReference>
<name>COXX_METNO</name>
<comment type="function">
    <text evidence="1">Converts heme B (protoheme IX) to heme O by substitution of the vinyl group on carbon 2 of heme B porphyrin ring with a hydroxyethyl farnesyl side group.</text>
</comment>
<comment type="catalytic activity">
    <reaction evidence="1">
        <text>heme b + (2E,6E)-farnesyl diphosphate + H2O = Fe(II)-heme o + diphosphate</text>
        <dbReference type="Rhea" id="RHEA:28070"/>
        <dbReference type="ChEBI" id="CHEBI:15377"/>
        <dbReference type="ChEBI" id="CHEBI:33019"/>
        <dbReference type="ChEBI" id="CHEBI:60344"/>
        <dbReference type="ChEBI" id="CHEBI:60530"/>
        <dbReference type="ChEBI" id="CHEBI:175763"/>
        <dbReference type="EC" id="2.5.1.141"/>
    </reaction>
</comment>
<comment type="pathway">
    <text evidence="1">Porphyrin-containing compound metabolism; heme O biosynthesis; heme O from protoheme: step 1/1.</text>
</comment>
<comment type="subcellular location">
    <subcellularLocation>
        <location evidence="1">Cell inner membrane</location>
        <topology evidence="1">Multi-pass membrane protein</topology>
    </subcellularLocation>
</comment>
<comment type="miscellaneous">
    <text evidence="1">Carbon 2 of the heme B porphyrin ring is defined according to the Fischer nomenclature.</text>
</comment>
<comment type="similarity">
    <text evidence="1">Belongs to the UbiA prenyltransferase family. Protoheme IX farnesyltransferase subfamily.</text>
</comment>
<evidence type="ECO:0000255" key="1">
    <source>
        <dbReference type="HAMAP-Rule" id="MF_00154"/>
    </source>
</evidence>
<sequence>MTSLTNSLNPAQTLAPASNGDVADFFALLKPRVMALVVFTALVGMTVSPSHVNPVIGAVSLLMIAVGAGASGCLNMWWDADIDAVMTRTRSRPIPAGRIRPEEALTFGLVLAVGSVLMLGLAANWLAAGLLAFTIVFYTVIYSMWLKRATAQNIVIGGAAGALPPMIGQAVVTGSVGIEGIILFLIIFIWTPPHFWALALVKSADYAKAGIPMMPNVAGPDSTRRQIVGYTLLLAPLGLAPVALGFGGLIYGLVALLGGLAMLVLSLQVHRRREGESADKAAMSLFGFSILYLFLLFSALLAEQGLGLMRPIPVLLG</sequence>
<keyword id="KW-0997">Cell inner membrane</keyword>
<keyword id="KW-1003">Cell membrane</keyword>
<keyword id="KW-0350">Heme biosynthesis</keyword>
<keyword id="KW-0472">Membrane</keyword>
<keyword id="KW-1185">Reference proteome</keyword>
<keyword id="KW-0808">Transferase</keyword>
<keyword id="KW-0812">Transmembrane</keyword>
<keyword id="KW-1133">Transmembrane helix</keyword>
<proteinExistence type="inferred from homology"/>
<gene>
    <name evidence="1" type="primary">ctaB</name>
    <name type="ordered locus">Mnod_0262</name>
</gene>
<feature type="chain" id="PRO_1000199655" description="Protoheme IX farnesyltransferase">
    <location>
        <begin position="1"/>
        <end position="317"/>
    </location>
</feature>
<feature type="transmembrane region" description="Helical" evidence="1">
    <location>
        <begin position="25"/>
        <end position="45"/>
    </location>
</feature>
<feature type="transmembrane region" description="Helical" evidence="1">
    <location>
        <begin position="54"/>
        <end position="74"/>
    </location>
</feature>
<feature type="transmembrane region" description="Helical" evidence="1">
    <location>
        <begin position="117"/>
        <end position="137"/>
    </location>
</feature>
<feature type="transmembrane region" description="Helical" evidence="1">
    <location>
        <begin position="167"/>
        <end position="189"/>
    </location>
</feature>
<feature type="transmembrane region" description="Helical" evidence="1">
    <location>
        <begin position="244"/>
        <end position="264"/>
    </location>
</feature>
<feature type="transmembrane region" description="Helical" evidence="1">
    <location>
        <begin position="281"/>
        <end position="301"/>
    </location>
</feature>
<reference key="1">
    <citation type="submission" date="2009-01" db="EMBL/GenBank/DDBJ databases">
        <title>Complete sequence of chromosome of Methylobacterium nodulans ORS 2060.</title>
        <authorList>
            <consortium name="US DOE Joint Genome Institute"/>
            <person name="Lucas S."/>
            <person name="Copeland A."/>
            <person name="Lapidus A."/>
            <person name="Glavina del Rio T."/>
            <person name="Dalin E."/>
            <person name="Tice H."/>
            <person name="Bruce D."/>
            <person name="Goodwin L."/>
            <person name="Pitluck S."/>
            <person name="Sims D."/>
            <person name="Brettin T."/>
            <person name="Detter J.C."/>
            <person name="Han C."/>
            <person name="Larimer F."/>
            <person name="Land M."/>
            <person name="Hauser L."/>
            <person name="Kyrpides N."/>
            <person name="Ivanova N."/>
            <person name="Marx C.J."/>
            <person name="Richardson P."/>
        </authorList>
    </citation>
    <scope>NUCLEOTIDE SEQUENCE [LARGE SCALE GENOMIC DNA]</scope>
    <source>
        <strain>LMG 21967 / CNCM I-2342 / ORS 2060</strain>
    </source>
</reference>
<organism>
    <name type="scientific">Methylobacterium nodulans (strain LMG 21967 / CNCM I-2342 / ORS 2060)</name>
    <dbReference type="NCBI Taxonomy" id="460265"/>
    <lineage>
        <taxon>Bacteria</taxon>
        <taxon>Pseudomonadati</taxon>
        <taxon>Pseudomonadota</taxon>
        <taxon>Alphaproteobacteria</taxon>
        <taxon>Hyphomicrobiales</taxon>
        <taxon>Methylobacteriaceae</taxon>
        <taxon>Methylobacterium</taxon>
    </lineage>
</organism>
<accession>B8I9Q3</accession>
<protein>
    <recommendedName>
        <fullName evidence="1">Protoheme IX farnesyltransferase</fullName>
        <ecNumber evidence="1">2.5.1.141</ecNumber>
    </recommendedName>
    <alternativeName>
        <fullName evidence="1">Heme B farnesyltransferase</fullName>
    </alternativeName>
    <alternativeName>
        <fullName evidence="1">Heme O synthase</fullName>
    </alternativeName>
</protein>